<comment type="function">
    <text evidence="1">Involved in transcription antitermination. Required for transcription of ribosomal RNA (rRNA) genes. Binds specifically to the boxA antiterminator sequence of the ribosomal RNA (rrn) operons.</text>
</comment>
<comment type="similarity">
    <text evidence="1">Belongs to the NusB family.</text>
</comment>
<sequence length="132" mass="14930">MATRHQVRQSVISLLYAFELNSQNNVFVDEILDEKKIRNEQKNFTLNLYNGILDNLNNIDETLNSFLNDNQITALGHVERAILRLGAYELLFTDTPSAIVINEAIELAKELANDNSPKFINGVLDALIKAKK</sequence>
<keyword id="KW-1185">Reference proteome</keyword>
<keyword id="KW-0694">RNA-binding</keyword>
<keyword id="KW-0804">Transcription</keyword>
<keyword id="KW-0889">Transcription antitermination</keyword>
<keyword id="KW-0805">Transcription regulation</keyword>
<proteinExistence type="inferred from homology"/>
<gene>
    <name evidence="1" type="primary">nusB</name>
    <name type="ordered locus">Cj0382c</name>
</gene>
<evidence type="ECO:0000255" key="1">
    <source>
        <dbReference type="HAMAP-Rule" id="MF_00073"/>
    </source>
</evidence>
<name>NUSB_CAMJE</name>
<reference key="1">
    <citation type="journal article" date="2000" name="Nature">
        <title>The genome sequence of the food-borne pathogen Campylobacter jejuni reveals hypervariable sequences.</title>
        <authorList>
            <person name="Parkhill J."/>
            <person name="Wren B.W."/>
            <person name="Mungall K.L."/>
            <person name="Ketley J.M."/>
            <person name="Churcher C.M."/>
            <person name="Basham D."/>
            <person name="Chillingworth T."/>
            <person name="Davies R.M."/>
            <person name="Feltwell T."/>
            <person name="Holroyd S."/>
            <person name="Jagels K."/>
            <person name="Karlyshev A.V."/>
            <person name="Moule S."/>
            <person name="Pallen M.J."/>
            <person name="Penn C.W."/>
            <person name="Quail M.A."/>
            <person name="Rajandream M.A."/>
            <person name="Rutherford K.M."/>
            <person name="van Vliet A.H.M."/>
            <person name="Whitehead S."/>
            <person name="Barrell B.G."/>
        </authorList>
    </citation>
    <scope>NUCLEOTIDE SEQUENCE [LARGE SCALE GENOMIC DNA]</scope>
    <source>
        <strain>ATCC 700819 / NCTC 11168</strain>
    </source>
</reference>
<accession>Q9PIC0</accession>
<accession>Q0PBC8</accession>
<protein>
    <recommendedName>
        <fullName evidence="1">Transcription antitermination protein NusB</fullName>
    </recommendedName>
    <alternativeName>
        <fullName evidence="1">Antitermination factor NusB</fullName>
    </alternativeName>
</protein>
<organism>
    <name type="scientific">Campylobacter jejuni subsp. jejuni serotype O:2 (strain ATCC 700819 / NCTC 11168)</name>
    <dbReference type="NCBI Taxonomy" id="192222"/>
    <lineage>
        <taxon>Bacteria</taxon>
        <taxon>Pseudomonadati</taxon>
        <taxon>Campylobacterota</taxon>
        <taxon>Epsilonproteobacteria</taxon>
        <taxon>Campylobacterales</taxon>
        <taxon>Campylobacteraceae</taxon>
        <taxon>Campylobacter</taxon>
    </lineage>
</organism>
<dbReference type="EMBL" id="AL111168">
    <property type="protein sequence ID" value="CAL34532.1"/>
    <property type="molecule type" value="Genomic_DNA"/>
</dbReference>
<dbReference type="PIR" id="D81381">
    <property type="entry name" value="D81381"/>
</dbReference>
<dbReference type="RefSeq" id="WP_002824771.1">
    <property type="nucleotide sequence ID" value="NZ_SZUC01000004.1"/>
</dbReference>
<dbReference type="RefSeq" id="YP_002343819.1">
    <property type="nucleotide sequence ID" value="NC_002163.1"/>
</dbReference>
<dbReference type="SMR" id="Q9PIC0"/>
<dbReference type="IntAct" id="Q9PIC0">
    <property type="interactions" value="8"/>
</dbReference>
<dbReference type="STRING" id="192222.Cj0382c"/>
<dbReference type="PaxDb" id="192222-Cj0382c"/>
<dbReference type="EnsemblBacteria" id="CAL34532">
    <property type="protein sequence ID" value="CAL34532"/>
    <property type="gene ID" value="Cj0382c"/>
</dbReference>
<dbReference type="GeneID" id="904705"/>
<dbReference type="KEGG" id="cje:Cj0382c"/>
<dbReference type="PATRIC" id="fig|192222.6.peg.373"/>
<dbReference type="eggNOG" id="COG0781">
    <property type="taxonomic scope" value="Bacteria"/>
</dbReference>
<dbReference type="HOGENOM" id="CLU_087843_3_3_7"/>
<dbReference type="OrthoDB" id="9797817at2"/>
<dbReference type="Proteomes" id="UP000000799">
    <property type="component" value="Chromosome"/>
</dbReference>
<dbReference type="GO" id="GO:0005829">
    <property type="term" value="C:cytosol"/>
    <property type="evidence" value="ECO:0007669"/>
    <property type="project" value="TreeGrafter"/>
</dbReference>
<dbReference type="GO" id="GO:0003723">
    <property type="term" value="F:RNA binding"/>
    <property type="evidence" value="ECO:0007669"/>
    <property type="project" value="UniProtKB-UniRule"/>
</dbReference>
<dbReference type="GO" id="GO:0006353">
    <property type="term" value="P:DNA-templated transcription termination"/>
    <property type="evidence" value="ECO:0007669"/>
    <property type="project" value="UniProtKB-UniRule"/>
</dbReference>
<dbReference type="GO" id="GO:0031564">
    <property type="term" value="P:transcription antitermination"/>
    <property type="evidence" value="ECO:0007669"/>
    <property type="project" value="UniProtKB-KW"/>
</dbReference>
<dbReference type="Gene3D" id="1.10.940.10">
    <property type="entry name" value="NusB-like"/>
    <property type="match status" value="1"/>
</dbReference>
<dbReference type="HAMAP" id="MF_00073">
    <property type="entry name" value="NusB"/>
    <property type="match status" value="1"/>
</dbReference>
<dbReference type="InterPro" id="IPR035926">
    <property type="entry name" value="NusB-like_sf"/>
</dbReference>
<dbReference type="InterPro" id="IPR011605">
    <property type="entry name" value="NusB_fam"/>
</dbReference>
<dbReference type="InterPro" id="IPR006027">
    <property type="entry name" value="NusB_RsmB_TIM44"/>
</dbReference>
<dbReference type="NCBIfam" id="TIGR01951">
    <property type="entry name" value="nusB"/>
    <property type="match status" value="1"/>
</dbReference>
<dbReference type="PANTHER" id="PTHR11078:SF3">
    <property type="entry name" value="ANTITERMINATION NUSB DOMAIN-CONTAINING PROTEIN"/>
    <property type="match status" value="1"/>
</dbReference>
<dbReference type="PANTHER" id="PTHR11078">
    <property type="entry name" value="N UTILIZATION SUBSTANCE PROTEIN B-RELATED"/>
    <property type="match status" value="1"/>
</dbReference>
<dbReference type="Pfam" id="PF01029">
    <property type="entry name" value="NusB"/>
    <property type="match status" value="1"/>
</dbReference>
<dbReference type="SUPFAM" id="SSF48013">
    <property type="entry name" value="NusB-like"/>
    <property type="match status" value="1"/>
</dbReference>
<feature type="chain" id="PRO_0000176520" description="Transcription antitermination protein NusB">
    <location>
        <begin position="1"/>
        <end position="132"/>
    </location>
</feature>